<comment type="function">
    <molecule>NS2</molecule>
    <text evidence="4 6">Together with NTPase and NS4, initiates the formation of the replication complex (By similarity). Induces the proliferation of the host smooth ER membranes forming long tubular structures (By similarity). These remodeled membranes probably form the viral factories that contain the replication complex (By similarity).</text>
</comment>
<comment type="function">
    <molecule>NTPase</molecule>
    <text evidence="4 5 6">Displays NTPase activity, but no helicase activity (By similarity). Induces the formation of convoluted membranes derived from the host ER (By similarity). These remodeled membranes probably form the viral factories that contain the replication complex (By similarity). Together with NS2 and NS4, initiates the formation of the replication complex (By similarity).</text>
</comment>
<comment type="function">
    <molecule>NS4</molecule>
    <text evidence="4 6">Probable key protein responsible for the formation of membrane alterations by the virus (By similarity). Induces the formation of convoluted membranes derived from the host ER (By similarity). These remodeled membranes probably form the viral factories that contain the replication complex (By similarity). Together with NS2 and NTPase, initiates the formation of the replication complex (By similarity).</text>
</comment>
<comment type="function">
    <molecule>Viral genome-linked protein</molecule>
    <text evidence="2">Viral genome-linked protein is covalently linked to the 5'-end of the positive-strand, negative-strand genomic RNAs and subgenomic RNA. Acts as a genome-linked replication primer. May recruit ribosome to viral RNA thereby promoting viral proteins translation. Interacts with host translation initiation complex to allow the translation of viral proteins.</text>
</comment>
<comment type="function">
    <molecule>3C-like protease</molecule>
    <text evidence="8">Processes the polyprotein. 3CLpro-RdRp is first released by autocleavage, then all other proteins are cleaved. May cleave polyadenylate-binding protein thereby inhibiting cellular translation.</text>
</comment>
<comment type="function">
    <molecule>RNA-directed RNA polymerase</molecule>
    <text evidence="7">Replicates genomic and antigenomic RNA by recognizing replications specific signals. Also transcribes a subgenomic mRNA by initiating RNA synthesis internally on antigenomic RNA. This sgRNA codes for structural proteins. Catalyzes the covalent attachment VPg with viral RNAs (By similarity).</text>
</comment>
<comment type="function">
    <molecule>Capsid protein VP60</molecule>
    <text evidence="1 7">Capsid protein VP60 self assembles to form an icosahedral capsid with a T=3 symmetry, about 35 nm in diameter, and consisting of 180 capsid proteins. A smaller form of capsid with a diameter of 23 nm might be capsid proteins assembled as icosahedron with T=1 symmetry (By similarity). The capsid encapsulate VP2 proteins and genomic or subgenomic RNA. Attaches virion to target cells by binding histo-blood group antigens, inducing endocytosis of the viral particle (By similarity). Acidification of the endosome induces conformational change of capsid protein thereby injecting virus genomic RNA into host cytoplasm (By similarity).</text>
</comment>
<comment type="catalytic activity">
    <molecule>NTPase</molecule>
    <reaction evidence="5">
        <text>a ribonucleoside 5'-triphosphate + H2O = a ribonucleoside 5'-diphosphate + phosphate + H(+)</text>
        <dbReference type="Rhea" id="RHEA:23680"/>
        <dbReference type="ChEBI" id="CHEBI:15377"/>
        <dbReference type="ChEBI" id="CHEBI:15378"/>
        <dbReference type="ChEBI" id="CHEBI:43474"/>
        <dbReference type="ChEBI" id="CHEBI:57930"/>
        <dbReference type="ChEBI" id="CHEBI:61557"/>
        <dbReference type="EC" id="3.6.1.15"/>
    </reaction>
</comment>
<comment type="catalytic activity">
    <molecule>3C-like protease</molecule>
    <reaction evidence="10">
        <text>Endopeptidase with a preference for cleavage when the P1 position is occupied by Glu-|-Xaa and the P1' position is occupied by Gly-|-Yaa.</text>
        <dbReference type="EC" id="3.4.22.66"/>
    </reaction>
</comment>
<comment type="catalytic activity">
    <molecule>RNA-directed RNA polymerase</molecule>
    <reaction evidence="8">
        <text>RNA(n) + a ribonucleoside 5'-triphosphate = RNA(n+1) + diphosphate</text>
        <dbReference type="Rhea" id="RHEA:21248"/>
        <dbReference type="Rhea" id="RHEA-COMP:14527"/>
        <dbReference type="Rhea" id="RHEA-COMP:17342"/>
        <dbReference type="ChEBI" id="CHEBI:33019"/>
        <dbReference type="ChEBI" id="CHEBI:61557"/>
        <dbReference type="ChEBI" id="CHEBI:140395"/>
        <dbReference type="EC" id="2.7.7.48"/>
    </reaction>
</comment>
<comment type="cofactor">
    <molecule>RNA-directed RNA polymerase</molecule>
    <cofactor evidence="3">
        <name>Mn(2+)</name>
        <dbReference type="ChEBI" id="CHEBI:29035"/>
    </cofactor>
</comment>
<comment type="subunit">
    <molecule>NS2</molecule>
    <text evidence="12">Homodimer.</text>
</comment>
<comment type="subunit">
    <molecule>Capsid protein VP60</molecule>
    <text evidence="7">Homomultimer. Interacts with host type II histo-blood group structures antigens at the surface of target cells.</text>
</comment>
<comment type="subcellular location">
    <molecule>NS1</molecule>
    <subcellularLocation>
        <location evidence="12">Host cytoplasm</location>
    </subcellularLocation>
</comment>
<comment type="subcellular location">
    <molecule>NS2</molecule>
    <subcellularLocation>
        <location evidence="12">Host cytoplasm</location>
    </subcellularLocation>
    <subcellularLocation>
        <location>Host endoplasmic reticulum</location>
    </subcellularLocation>
</comment>
<comment type="subcellular location">
    <molecule>NS4</molecule>
    <subcellularLocation>
        <location evidence="12">Host cytoplasm</location>
    </subcellularLocation>
</comment>
<comment type="subcellular location">
    <molecule>Capsid protein VP60</molecule>
    <subcellularLocation>
        <location>Virion</location>
    </subcellularLocation>
    <subcellularLocation>
        <location evidence="13">Host cytoplasm</location>
    </subcellularLocation>
</comment>
<comment type="alternative products">
    <event type="alternative promoter"/>
    <isoform>
        <id>P27411-1</id>
        <name>Genome polyprotein</name>
        <sequence type="displayed"/>
    </isoform>
    <isoform>
        <id>P27411-2</id>
        <name>Subgenomic capsid protein VP60</name>
        <name>VP1</name>
        <sequence type="described" ref="VSP_034383"/>
    </isoform>
</comment>
<comment type="PTM">
    <molecule>Genome polyprotein</molecule>
    <text evidence="3">Specific enzymatic cleavages by its own cysteine protease yield mature proteins (By similarity). The protease cleaves itself from the nascent polyprotein autocatalytically. Precursor p41 can be cleaved by viral 3CLpro into protein p19 and VPg, or cleaved by host protease into protein p23/2 and protein p18 (By similarity).</text>
</comment>
<comment type="PTM">
    <molecule>Viral genome-linked protein</molecule>
    <text evidence="6">VPg is uridylylated by the polymerase and is covalently attached to the 5'-end of the polyadenylated genomic and subgenomic RNAs. This uridylylated form acts as a nucleotide-peptide primer for the polymerase.</text>
</comment>
<comment type="miscellaneous">
    <text evidence="1">Two different RNAs lead the expression of the capsid protein. One arises from the cleavage of the polyprotein translated from the genomic RNA and the other from the translation of a subgenomic RNA derived from the (-)RNA template. Capsid protein expressed from the subgenomic mRNA is produced in much larger amounts than the cleaved one (By similarity).</text>
</comment>
<comment type="miscellaneous">
    <molecule>Isoform Genome polyprotein</molecule>
    <text>Produced from the genomic RNA.</text>
</comment>
<comment type="miscellaneous">
    <molecule>Isoform Subgenomic capsid protein VP60</molecule>
    <text evidence="13">Produced from the subgenomic RNA.</text>
</comment>
<keyword id="KW-0877">Alternative promoter usage</keyword>
<keyword id="KW-0067">ATP-binding</keyword>
<keyword id="KW-0167">Capsid protein</keyword>
<keyword id="KW-0191">Covalent protein-RNA linkage</keyword>
<keyword id="KW-1015">Disulfide bond</keyword>
<keyword id="KW-0347">Helicase</keyword>
<keyword id="KW-1035">Host cytoplasm</keyword>
<keyword id="KW-1038">Host endoplasmic reticulum</keyword>
<keyword id="KW-0378">Hydrolase</keyword>
<keyword id="KW-0547">Nucleotide-binding</keyword>
<keyword id="KW-0548">Nucleotidyltransferase</keyword>
<keyword id="KW-0597">Phosphoprotein</keyword>
<keyword id="KW-0645">Protease</keyword>
<keyword id="KW-0696">RNA-directed RNA polymerase</keyword>
<keyword id="KW-0788">Thiol protease</keyword>
<keyword id="KW-0808">Transferase</keyword>
<keyword id="KW-0693">Viral RNA replication</keyword>
<keyword id="KW-0946">Virion</keyword>
<accession>P27411</accession>
<accession>Q86114</accession>
<reference key="1">
    <citation type="journal article" date="1997" name="Virus Res.">
        <title>The complete nucleotide sequence of rabbit haemorrhagic disease virus (Czech strain V351): use of the polymerase chain reaction to detect replication in Australian vertebrates and analysis of viral population sequence variation.</title>
        <authorList>
            <person name="Gould A.R."/>
            <person name="Kattenbelt J.A."/>
            <person name="Lenghaus C."/>
            <person name="Morrissy C."/>
            <person name="Chamberlain T."/>
            <person name="Collins B.J."/>
            <person name="Westbury H.A."/>
        </authorList>
    </citation>
    <scope>NUCLEOTIDE SEQUENCE [GENOMIC RNA]</scope>
</reference>
<reference key="2">
    <citation type="journal article" date="1992" name="FEMS Microbiol. Lett.">
        <title>Genomic 3' terminal sequence comparison of three isolates of rabbit haemorrhagic disease virus.</title>
        <authorList>
            <person name="Milton I.D."/>
            <person name="Vlasak R."/>
            <person name="Nowotny N."/>
            <person name="Rodak L."/>
            <person name="Carter M.J."/>
        </authorList>
    </citation>
    <scope>NUCLEOTIDE SEQUENCE [GENOMIC RNA] OF 2111-2344</scope>
</reference>
<reference key="3">
    <citation type="journal article" date="2015" name="Virology">
        <title>Expression and partial characterisation of rabbit haemorrhagic disease virus non-structural proteins.</title>
        <authorList>
            <person name="Urakova N."/>
            <person name="Frese M."/>
            <person name="Hall R.N."/>
            <person name="Liu J."/>
            <person name="Matthaei M."/>
            <person name="Strive T."/>
        </authorList>
    </citation>
    <scope>SUBCELLULAR LOCATION (NS1)</scope>
    <scope>SUBCELLULAR LOCATION (NS2)</scope>
    <scope>SUBCELLULAR LOCATION (NS4)</scope>
    <scope>SUBUNIT (NS2)</scope>
    <scope>PROTEOLYTIC CLEAVAGE (GENOME POLYPROTEIN)</scope>
</reference>
<sequence length="2344" mass="256908">MAAMSRLTGMTTAILPEKKPLSFFLDLRDKTPPCCIRATGRLAWPVFPGQNGKEGPLETCNMCGKWLNGFGNFGLEDLGDVCLRSIAQQKHKFGPVCLCNRVYLHDCGRWRRRSRFLKHYKALNKVIPCAYQFVESFPTPIFEGEVDDLFVELGAPTSMGFMDKKLLKKGKKLMDKFVDVDEPCLTSRDASLLDSIASDNTIRAKLEEEYGVEMVQAARDRKDFMKNLRLALDNWPANPVTWYRKLGNITKKGKQWAKKVVYGARKVTDPLKTLASILLVGLHNVIAVDTTVMLSTFNPVNLLAILMDWNNDLTGFFATLVRLLELYGVVQATVNLIIEGVKSFWDKVVCATDRCFDLLKRLFDTFEDSVPTGPTAGCLIFMAFVFSTVVGYLPNNSVITTFMKGAGKLTTFAGVVGAIRTLWITINQHMVAKDLTSVQQKVMTVVKMANEAATLDQLEIVSCLCSDLETTLTNRCTLPSYNQHLGILNASQKVISDLHTMVLGKINTSKQRPQPVAVIFKGAPGIGKTYLVHRIARDLGCQHPSTINFGLDHFDSYTGEEVAIADESNTCGDGESWVELFIQMVNTNPCPLNCDKAENKNKVFNSKYLLCTTNSNMILNATHPRAGAFYRRVMIVEARNKAVESWQATRHGSKPGKSCYNKDMSHLTFQVYPHNMPAPGFVFVGDKLVKSQVTPREYKYSELLDLIKSEHPDVASFEGANKFNFVYPDAQYDQALLMWKQYFVMYGCVARLAKNFVDDIPYNQVHISRASDPKIEGCVEYQCKFQHLWRMVPQFVLGCVNMTNQLGTPLTQQQLDRITNGVEGVTVTTVNNILPFHSQTTLINPSFIKLIWAVRKHLKGLSGVTKVAQFIWRVMTNPVDAYGTLVRTLTGAATFSDDPVSTTIICSNCTIQLHSCGGLLVRYSRDPVPVASDNVDRGDQGVDVFTDPNLISGFSWRQIAHLFVEVISHLCANHLVNLATMAALGAVATKAFQGVKGKTKRGRGARVNLGNDEYDEWQAARREFVNAHDMTAEEYLAMKNKAAMGSDDQDSIMFRSWWTRRQLRPDEDQVTIVGRSGVRNEVIRTRVRQTPRGPKTLDDGGFYDNDYEGLPGFMRHNGSGRMIHIGNGLYISNTHTARSSCSEIVTCSPTTDLCLVKGEAIRSVAQIAEGTPVCDWKKSPISTYGIKKTLSDSTKIDVLAYDGCTQTTHGDCGLPLYDSSGKIVAIHTGKLLGFSKMCTLIDLTITKGVYETSNFFCGEPIDYRGITAHRLVGAEPRPPVSGTRYAKVPGVPDEYKTGYRPANLGRSDPDSDKSLMNIAVKNLQVYQQEPKLDKVDEFIERAAADVLGYLRFLTKGERQANLNFKAAFNTLDLSTSCGPFAPGKKIDHVKDGVMDQVLAKHLYKCWSVANSGKALHHIYACGLKDELRPLDKVKEGKKRLLWGCDVGVAVCAAAVFHNICYELKMVARFGPIAVGVDMTSRDVDVIINNLTSKASDFLCLDYSKWDSTMSPCVVRLAIDILADCCEQTELTKSVVLTLKSHPMTILDAMIVQTKRGLPSGMPFTSVINSICHWLLWSAAVYKSCAEIGLHCSNLYEDAPFYTYGDDGVYAMTPMMVSLLPAIIENLRDYGLSPTAADKTEFIDVCPLNKISFLKRTFELTDIGWVSKLDKSSILRQLEWSKTTSRHMVIEETYDLAKEERGVQLEELQVAAAAHGQEFFNFVCGELVRQQAYTQFSVYSYDAARKILADRKRVVSVVPDDEFVNVMEGKARAAPQGEAARTATTASVPGTTTDGMDPGVVATTSVITAENSSASIATAGIGGPPQQVDQQETWRTNFYYNDVFTWSVADAPGSILYTVQHSPQNNPFTAVLSQMYAGWAGGMQFRFIVAGSGVFGGRLVRAVIPPGIEIGPGLEVRQFPHVVIDARSLEPVTITMPDLRPNMYHPTGDPGLVPTLVLSVYNNLINPFGGSTSAIQVTVETRPSEDFEFVMIRAPSSKTVDSISPAGLLTTPDLTGVGNDNRWNGQIVGLQPVPGGFSTCNRHWNLNGSTYGWSSPRFADIDHRKGSASYPGSNATNVLQFWYANAGSAIDNPISQVAPDGLPDMSFVPFNGPGIPAAGWVGFGAIWNSNSGAPNVTTVQAYELGFATGAPGNLQPTTNTSGAQTVAKSIYAVVTGTAQNPAGLFVMASGIISTPNASAITYTPQPDRIVTTPGTPAAAPVGKNTPIMFASVVRRTGDVNATAGSANGTQYGTGSQPLPVTIGLSLNNYSSALMPGQFFVWQLTFASGFMEIGLSVDGYFYAGTGASTTLIDLTELIDVRPVGPRPSKSTLVFNLGGTANGFSYV</sequence>
<proteinExistence type="evidence at protein level"/>
<evidence type="ECO:0000250" key="1"/>
<evidence type="ECO:0000250" key="2">
    <source>
        <dbReference type="UniProtKB" id="P27409"/>
    </source>
</evidence>
<evidence type="ECO:0000250" key="3">
    <source>
        <dbReference type="UniProtKB" id="P27410"/>
    </source>
</evidence>
<evidence type="ECO:0000250" key="4">
    <source>
        <dbReference type="UniProtKB" id="P54634"/>
    </source>
</evidence>
<evidence type="ECO:0000250" key="5">
    <source>
        <dbReference type="UniProtKB" id="Q04544"/>
    </source>
</evidence>
<evidence type="ECO:0000250" key="6">
    <source>
        <dbReference type="UniProtKB" id="Q66914"/>
    </source>
</evidence>
<evidence type="ECO:0000250" key="7">
    <source>
        <dbReference type="UniProtKB" id="Q86119"/>
    </source>
</evidence>
<evidence type="ECO:0000255" key="8">
    <source>
        <dbReference type="PROSITE-ProRule" id="PRU00539"/>
    </source>
</evidence>
<evidence type="ECO:0000255" key="9">
    <source>
        <dbReference type="PROSITE-ProRule" id="PRU00551"/>
    </source>
</evidence>
<evidence type="ECO:0000255" key="10">
    <source>
        <dbReference type="PROSITE-ProRule" id="PRU01242"/>
    </source>
</evidence>
<evidence type="ECO:0000256" key="11">
    <source>
        <dbReference type="SAM" id="MobiDB-lite"/>
    </source>
</evidence>
<evidence type="ECO:0000269" key="12">
    <source>
    </source>
</evidence>
<evidence type="ECO:0000305" key="13"/>
<evidence type="ECO:0000305" key="14">
    <source>
    </source>
</evidence>
<name>POLG_RHDV3</name>
<organismHost>
    <name type="scientific">Oryctolagus cuniculus</name>
    <name type="common">Rabbit</name>
    <dbReference type="NCBI Taxonomy" id="9986"/>
</organismHost>
<protein>
    <recommendedName>
        <fullName>Genome polyprotein</fullName>
    </recommendedName>
    <alternativeName>
        <fullName>p254</fullName>
    </alternativeName>
    <component>
        <recommendedName>
            <fullName>NS1</fullName>
        </recommendedName>
        <alternativeName>
            <fullName>Protein p16</fullName>
        </alternativeName>
    </component>
    <component>
        <recommendedName>
            <fullName>NS2</fullName>
        </recommendedName>
        <alternativeName>
            <fullName>Protein p23</fullName>
        </alternativeName>
    </component>
    <component>
        <recommendedName>
            <fullName>NTPase</fullName>
            <ecNumber evidence="5">3.6.1.15</ecNumber>
        </recommendedName>
        <alternativeName>
            <fullName>2C-like protein</fullName>
        </alternativeName>
        <alternativeName>
            <fullName>NS3</fullName>
        </alternativeName>
        <alternativeName>
            <fullName>P2C</fullName>
        </alternativeName>
        <alternativeName>
            <fullName>p37</fullName>
        </alternativeName>
    </component>
    <component>
        <recommendedName>
            <fullName>Precursor p41</fullName>
        </recommendedName>
    </component>
    <component>
        <recommendedName>
            <fullName>NS4</fullName>
        </recommendedName>
        <alternativeName>
            <fullName>Protein p29</fullName>
        </alternativeName>
    </component>
    <component>
        <recommendedName>
            <fullName>Protein p23/2</fullName>
        </recommendedName>
    </component>
    <component>
        <recommendedName>
            <fullName>Protein p18</fullName>
        </recommendedName>
    </component>
    <component>
        <recommendedName>
            <fullName>Viral genome-linked protein</fullName>
        </recommendedName>
        <alternativeName>
            <fullName>NS5</fullName>
        </alternativeName>
        <alternativeName>
            <fullName>VPg</fullName>
        </alternativeName>
        <alternativeName>
            <fullName>p13</fullName>
        </alternativeName>
    </component>
    <component>
        <recommendedName>
            <fullName>3C-like protease</fullName>
            <shortName>3CLpro</shortName>
            <ecNumber>3.4.22.66</ecNumber>
        </recommendedName>
        <alternativeName>
            <fullName>Calicivirin</fullName>
        </alternativeName>
        <alternativeName>
            <fullName>NS6</fullName>
        </alternativeName>
        <alternativeName>
            <fullName>Thiol protease P3C</fullName>
        </alternativeName>
        <alternativeName>
            <fullName>p15</fullName>
        </alternativeName>
    </component>
    <component>
        <recommendedName>
            <fullName>RNA-directed RNA polymerase</fullName>
            <ecNumber>2.7.7.48</ecNumber>
        </recommendedName>
        <alternativeName>
            <fullName>3Dpol</fullName>
        </alternativeName>
        <alternativeName>
            <fullName>NS7</fullName>
        </alternativeName>
        <alternativeName>
            <fullName>p58</fullName>
        </alternativeName>
    </component>
    <component>
        <recommendedName>
            <fullName>Capsid protein VP60</fullName>
        </recommendedName>
    </component>
</protein>
<feature type="chain" id="PRO_0000342011" description="Genome polyprotein">
    <location>
        <begin position="1"/>
        <end position="2344"/>
    </location>
</feature>
<feature type="chain" id="PRO_0000036977" description="NS1">
    <location>
        <begin position="1"/>
        <end position="143"/>
    </location>
</feature>
<feature type="chain" id="PRO_0000036978" description="NS2">
    <location>
        <begin position="144"/>
        <end position="339"/>
    </location>
</feature>
<feature type="chain" id="PRO_0000036979" description="NTPase">
    <location>
        <begin position="340"/>
        <end position="718"/>
    </location>
</feature>
<feature type="chain" id="PRO_0000342012" description="Precursor p41">
    <location>
        <begin position="719"/>
        <end position="1108"/>
    </location>
</feature>
<feature type="chain" id="PRO_0000036980" description="NS4">
    <location>
        <begin position="719"/>
        <end position="993"/>
    </location>
</feature>
<feature type="chain" id="PRO_0000342013" description="Protein p23/2">
    <location>
        <begin position="719"/>
        <end position="936"/>
    </location>
</feature>
<feature type="chain" id="PRO_0000342014" description="Protein p18">
    <location>
        <begin position="937"/>
        <end position="1108"/>
    </location>
</feature>
<feature type="chain" id="PRO_0000036981" description="Viral genome-linked protein">
    <location>
        <begin position="994"/>
        <end position="1108"/>
    </location>
</feature>
<feature type="chain" id="PRO_0000036982" description="3C-like protease">
    <location>
        <begin position="1109"/>
        <end position="1251"/>
    </location>
</feature>
<feature type="chain" id="PRO_0000036983" description="RNA-directed RNA polymerase">
    <location>
        <begin position="1252"/>
        <end position="1767"/>
    </location>
</feature>
<feature type="chain" id="PRO_0000036985" description="Capsid protein VP60">
    <location>
        <begin position="1768"/>
        <end position="2344"/>
    </location>
</feature>
<feature type="domain" description="SF3 helicase" evidence="9">
    <location>
        <begin position="492"/>
        <end position="653"/>
    </location>
</feature>
<feature type="domain" description="Peptidase C24" evidence="10">
    <location>
        <begin position="1109"/>
        <end position="1244"/>
    </location>
</feature>
<feature type="domain" description="RdRp catalytic" evidence="8">
    <location>
        <begin position="1495"/>
        <end position="1619"/>
    </location>
</feature>
<feature type="region of interest" description="Disordered" evidence="11">
    <location>
        <begin position="1774"/>
        <end position="1796"/>
    </location>
</feature>
<feature type="compositionally biased region" description="Low complexity" evidence="11">
    <location>
        <begin position="1781"/>
        <end position="1792"/>
    </location>
</feature>
<feature type="active site" description="For 3CLpro activity" evidence="10">
    <location>
        <position position="1135"/>
    </location>
</feature>
<feature type="active site" description="For 3CLpro activity" evidence="10">
    <location>
        <position position="1152"/>
    </location>
</feature>
<feature type="active site" description="For 3CLpro activity" evidence="10">
    <location>
        <position position="1212"/>
    </location>
</feature>
<feature type="binding site" evidence="9">
    <location>
        <begin position="522"/>
        <end position="529"/>
    </location>
    <ligand>
        <name>ATP</name>
        <dbReference type="ChEBI" id="CHEBI:30616"/>
    </ligand>
</feature>
<feature type="site" description="Cleavage; by 3CLpro" evidence="14">
    <location>
        <begin position="143"/>
        <end position="144"/>
    </location>
</feature>
<feature type="site" description="Cleavage; by Pro-Pol" evidence="3">
    <location>
        <begin position="339"/>
        <end position="340"/>
    </location>
</feature>
<feature type="site" description="Cleavage; by 3CLpro" evidence="3">
    <location>
        <begin position="718"/>
        <end position="719"/>
    </location>
</feature>
<feature type="site" description="Cleavage; by host" evidence="3">
    <location>
        <begin position="936"/>
        <end position="937"/>
    </location>
</feature>
<feature type="site" description="Cleavage; by Pro-Pol" evidence="3">
    <location>
        <begin position="993"/>
        <end position="994"/>
    </location>
</feature>
<feature type="site" description="Cleavage; by 3CLpro" evidence="3">
    <location>
        <begin position="1108"/>
        <end position="1109"/>
    </location>
</feature>
<feature type="site" description="Cleavage; by Pro-Pol" evidence="3">
    <location>
        <begin position="1251"/>
        <end position="1252"/>
    </location>
</feature>
<feature type="site" description="Cleavage; by Pro-Pol" evidence="3">
    <location>
        <begin position="1767"/>
        <end position="1768"/>
    </location>
</feature>
<feature type="modified residue" description="O-(5'-phospho-RNA)-tyrosine" evidence="7">
    <location>
        <position position="1014"/>
    </location>
</feature>
<feature type="modified residue" description="O-UMP-tyrosine; transient" evidence="7">
    <location>
        <position position="1014"/>
    </location>
</feature>
<feature type="disulfide bond" evidence="1">
    <location>
        <begin position="1584"/>
        <end position="1591"/>
    </location>
</feature>
<feature type="splice variant" id="VSP_034383" description="In isoform Subgenomic capsid protein VP60." evidence="13">
    <location>
        <begin position="1"/>
        <end position="1765"/>
    </location>
</feature>
<feature type="sequence conflict" description="In Ref. 2; CAA77633." evidence="13" ref="2">
    <original>A</original>
    <variation>V</variation>
    <location>
        <position position="2245"/>
    </location>
</feature>
<organism>
    <name type="scientific">Rabbit hemorrhagic disease virus (strain V-351)</name>
    <name type="common">Ra/LV/RHDV/V351/1991/CK</name>
    <name type="synonym">RHDV-V351</name>
    <dbReference type="NCBI Taxonomy" id="11977"/>
    <lineage>
        <taxon>Viruses</taxon>
        <taxon>Riboviria</taxon>
        <taxon>Orthornavirae</taxon>
        <taxon>Pisuviricota</taxon>
        <taxon>Pisoniviricetes</taxon>
        <taxon>Picornavirales</taxon>
        <taxon>Caliciviridae</taxon>
        <taxon>Lagovirus</taxon>
        <taxon>Rabbit hemorrhagic disease virus</taxon>
    </lineage>
</organism>
<dbReference type="EC" id="3.6.1.15" evidence="5"/>
<dbReference type="EC" id="3.4.22.66"/>
<dbReference type="EC" id="2.7.7.48"/>
<dbReference type="EMBL" id="U54983">
    <property type="protein sequence ID" value="AAB02225.1"/>
    <property type="molecule type" value="Genomic_RNA"/>
</dbReference>
<dbReference type="EMBL" id="Z11535">
    <property type="protein sequence ID" value="CAA77633.1"/>
    <property type="molecule type" value="Genomic_RNA"/>
</dbReference>
<dbReference type="PIR" id="S22134">
    <property type="entry name" value="S22134"/>
</dbReference>
<dbReference type="SMR" id="P27411"/>
<dbReference type="MEROPS" id="C24.001"/>
<dbReference type="BRENDA" id="2.7.7.48">
    <property type="organism ID" value="5265"/>
</dbReference>
<dbReference type="Proteomes" id="UP000008652">
    <property type="component" value="Genome"/>
</dbReference>
<dbReference type="GO" id="GO:0044165">
    <property type="term" value="C:host cell endoplasmic reticulum"/>
    <property type="evidence" value="ECO:0007669"/>
    <property type="project" value="UniProtKB-SubCell"/>
</dbReference>
<dbReference type="GO" id="GO:0019028">
    <property type="term" value="C:viral capsid"/>
    <property type="evidence" value="ECO:0007669"/>
    <property type="project" value="UniProtKB-KW"/>
</dbReference>
<dbReference type="GO" id="GO:0005524">
    <property type="term" value="F:ATP binding"/>
    <property type="evidence" value="ECO:0007669"/>
    <property type="project" value="UniProtKB-KW"/>
</dbReference>
<dbReference type="GO" id="GO:0004197">
    <property type="term" value="F:cysteine-type endopeptidase activity"/>
    <property type="evidence" value="ECO:0007669"/>
    <property type="project" value="InterPro"/>
</dbReference>
<dbReference type="GO" id="GO:0017111">
    <property type="term" value="F:ribonucleoside triphosphate phosphatase activity"/>
    <property type="evidence" value="ECO:0007669"/>
    <property type="project" value="UniProtKB-EC"/>
</dbReference>
<dbReference type="GO" id="GO:0003723">
    <property type="term" value="F:RNA binding"/>
    <property type="evidence" value="ECO:0007669"/>
    <property type="project" value="InterPro"/>
</dbReference>
<dbReference type="GO" id="GO:0003724">
    <property type="term" value="F:RNA helicase activity"/>
    <property type="evidence" value="ECO:0007669"/>
    <property type="project" value="InterPro"/>
</dbReference>
<dbReference type="GO" id="GO:0003968">
    <property type="term" value="F:RNA-directed RNA polymerase activity"/>
    <property type="evidence" value="ECO:0007669"/>
    <property type="project" value="UniProtKB-KW"/>
</dbReference>
<dbReference type="GO" id="GO:0006351">
    <property type="term" value="P:DNA-templated transcription"/>
    <property type="evidence" value="ECO:0007669"/>
    <property type="project" value="InterPro"/>
</dbReference>
<dbReference type="GO" id="GO:0006508">
    <property type="term" value="P:proteolysis"/>
    <property type="evidence" value="ECO:0007669"/>
    <property type="project" value="UniProtKB-KW"/>
</dbReference>
<dbReference type="GO" id="GO:0039694">
    <property type="term" value="P:viral RNA genome replication"/>
    <property type="evidence" value="ECO:0007669"/>
    <property type="project" value="InterPro"/>
</dbReference>
<dbReference type="CDD" id="cd00009">
    <property type="entry name" value="AAA"/>
    <property type="match status" value="1"/>
</dbReference>
<dbReference type="CDD" id="cd23192">
    <property type="entry name" value="Caliciviridae_RdRp"/>
    <property type="match status" value="1"/>
</dbReference>
<dbReference type="CDD" id="cd00205">
    <property type="entry name" value="rhv_like"/>
    <property type="match status" value="1"/>
</dbReference>
<dbReference type="Gene3D" id="1.10.260.110">
    <property type="match status" value="1"/>
</dbReference>
<dbReference type="Gene3D" id="1.20.960.20">
    <property type="match status" value="1"/>
</dbReference>
<dbReference type="Gene3D" id="2.60.120.20">
    <property type="match status" value="1"/>
</dbReference>
<dbReference type="Gene3D" id="3.30.70.270">
    <property type="match status" value="1"/>
</dbReference>
<dbReference type="Gene3D" id="4.10.8.20">
    <property type="entry name" value="DNA/RNA polymerases"/>
    <property type="match status" value="1"/>
</dbReference>
<dbReference type="Gene3D" id="3.40.50.300">
    <property type="entry name" value="P-loop containing nucleotide triphosphate hydrolases"/>
    <property type="match status" value="1"/>
</dbReference>
<dbReference type="InterPro" id="IPR004005">
    <property type="entry name" value="Calicivirus_coat"/>
</dbReference>
<dbReference type="InterPro" id="IPR043502">
    <property type="entry name" value="DNA/RNA_pol_sf"/>
</dbReference>
<dbReference type="InterPro" id="IPR004004">
    <property type="entry name" value="Helic/Pol/Pept_Calicivir-typ"/>
</dbReference>
<dbReference type="InterPro" id="IPR000605">
    <property type="entry name" value="Helicase_SF3_ssDNA/RNA_vir"/>
</dbReference>
<dbReference type="InterPro" id="IPR014759">
    <property type="entry name" value="Helicase_SF3_ssRNA_vir"/>
</dbReference>
<dbReference type="InterPro" id="IPR027417">
    <property type="entry name" value="P-loop_NTPase"/>
</dbReference>
<dbReference type="InterPro" id="IPR000317">
    <property type="entry name" value="Peptidase_C24"/>
</dbReference>
<dbReference type="InterPro" id="IPR009003">
    <property type="entry name" value="Peptidase_S1_PA"/>
</dbReference>
<dbReference type="InterPro" id="IPR043128">
    <property type="entry name" value="Rev_trsase/Diguanyl_cyclase"/>
</dbReference>
<dbReference type="InterPro" id="IPR033703">
    <property type="entry name" value="Rhv-like"/>
</dbReference>
<dbReference type="InterPro" id="IPR001205">
    <property type="entry name" value="RNA-dir_pol_C"/>
</dbReference>
<dbReference type="InterPro" id="IPR007094">
    <property type="entry name" value="RNA-dir_pol_PSvirus"/>
</dbReference>
<dbReference type="InterPro" id="IPR029053">
    <property type="entry name" value="Viral_coat"/>
</dbReference>
<dbReference type="InterPro" id="IPR049434">
    <property type="entry name" value="VPg"/>
</dbReference>
<dbReference type="Pfam" id="PF00915">
    <property type="entry name" value="Calici_coat"/>
    <property type="match status" value="1"/>
</dbReference>
<dbReference type="Pfam" id="PF03510">
    <property type="entry name" value="Peptidase_C24"/>
    <property type="match status" value="1"/>
</dbReference>
<dbReference type="Pfam" id="PF00680">
    <property type="entry name" value="RdRP_1"/>
    <property type="match status" value="1"/>
</dbReference>
<dbReference type="Pfam" id="PF00910">
    <property type="entry name" value="RNA_helicase"/>
    <property type="match status" value="1"/>
</dbReference>
<dbReference type="Pfam" id="PF20915">
    <property type="entry name" value="VPg"/>
    <property type="match status" value="1"/>
</dbReference>
<dbReference type="PRINTS" id="PR00916">
    <property type="entry name" value="2CENDOPTASE"/>
</dbReference>
<dbReference type="PRINTS" id="PR00918">
    <property type="entry name" value="CALICVIRUSNS"/>
</dbReference>
<dbReference type="SUPFAM" id="SSF56672">
    <property type="entry name" value="DNA/RNA polymerases"/>
    <property type="match status" value="1"/>
</dbReference>
<dbReference type="SUPFAM" id="SSF52540">
    <property type="entry name" value="P-loop containing nucleoside triphosphate hydrolases"/>
    <property type="match status" value="1"/>
</dbReference>
<dbReference type="SUPFAM" id="SSF88633">
    <property type="entry name" value="Positive stranded ssRNA viruses"/>
    <property type="match status" value="1"/>
</dbReference>
<dbReference type="SUPFAM" id="SSF50494">
    <property type="entry name" value="Trypsin-like serine proteases"/>
    <property type="match status" value="1"/>
</dbReference>
<dbReference type="PROSITE" id="PS51894">
    <property type="entry name" value="CV_3CL_PRO"/>
    <property type="match status" value="1"/>
</dbReference>
<dbReference type="PROSITE" id="PS50507">
    <property type="entry name" value="RDRP_SSRNA_POS"/>
    <property type="match status" value="1"/>
</dbReference>
<dbReference type="PROSITE" id="PS51218">
    <property type="entry name" value="SF3_HELICASE_2"/>
    <property type="match status" value="1"/>
</dbReference>
<gene>
    <name type="ORF">ORF1</name>
</gene>